<reference key="1">
    <citation type="journal article" date="1985" name="Nucleic Acids Res.">
        <title>Structure and function of the region of the replication origin of the Bacillus subtilis chromosome. III. Nucleotide sequence of some 10,000 base pairs in the origin region.</title>
        <authorList>
            <person name="Moriya S."/>
            <person name="Ogasawara N."/>
            <person name="Yoshikawa H."/>
        </authorList>
    </citation>
    <scope>NUCLEOTIDE SEQUENCE [GENOMIC DNA]</scope>
</reference>
<reference key="2">
    <citation type="journal article" date="1992" name="Mol. Microbiol.">
        <title>Genes and their organization in the replication origin region of the bacterial chromosome.</title>
        <authorList>
            <person name="Ogasawara N."/>
            <person name="Yoshikawa H."/>
        </authorList>
    </citation>
    <scope>NUCLEOTIDE SEQUENCE [GENOMIC DNA]</scope>
    <source>
        <strain>168 / CRK2000</strain>
    </source>
</reference>
<reference key="3">
    <citation type="journal article" date="1994" name="DNA Res.">
        <title>Systematic sequencing of the 180 kilobase region of the Bacillus subtilis chromosome containing the replication origin.</title>
        <authorList>
            <person name="Ogasawara N."/>
            <person name="Nakai S."/>
            <person name="Yoshikawa H."/>
        </authorList>
    </citation>
    <scope>NUCLEOTIDE SEQUENCE [GENOMIC DNA]</scope>
    <source>
        <strain>168</strain>
    </source>
</reference>
<reference key="4">
    <citation type="journal article" date="1997" name="Nature">
        <title>The complete genome sequence of the Gram-positive bacterium Bacillus subtilis.</title>
        <authorList>
            <person name="Kunst F."/>
            <person name="Ogasawara N."/>
            <person name="Moszer I."/>
            <person name="Albertini A.M."/>
            <person name="Alloni G."/>
            <person name="Azevedo V."/>
            <person name="Bertero M.G."/>
            <person name="Bessieres P."/>
            <person name="Bolotin A."/>
            <person name="Borchert S."/>
            <person name="Borriss R."/>
            <person name="Boursier L."/>
            <person name="Brans A."/>
            <person name="Braun M."/>
            <person name="Brignell S.C."/>
            <person name="Bron S."/>
            <person name="Brouillet S."/>
            <person name="Bruschi C.V."/>
            <person name="Caldwell B."/>
            <person name="Capuano V."/>
            <person name="Carter N.M."/>
            <person name="Choi S.-K."/>
            <person name="Codani J.-J."/>
            <person name="Connerton I.F."/>
            <person name="Cummings N.J."/>
            <person name="Daniel R.A."/>
            <person name="Denizot F."/>
            <person name="Devine K.M."/>
            <person name="Duesterhoeft A."/>
            <person name="Ehrlich S.D."/>
            <person name="Emmerson P.T."/>
            <person name="Entian K.-D."/>
            <person name="Errington J."/>
            <person name="Fabret C."/>
            <person name="Ferrari E."/>
            <person name="Foulger D."/>
            <person name="Fritz C."/>
            <person name="Fujita M."/>
            <person name="Fujita Y."/>
            <person name="Fuma S."/>
            <person name="Galizzi A."/>
            <person name="Galleron N."/>
            <person name="Ghim S.-Y."/>
            <person name="Glaser P."/>
            <person name="Goffeau A."/>
            <person name="Golightly E.J."/>
            <person name="Grandi G."/>
            <person name="Guiseppi G."/>
            <person name="Guy B.J."/>
            <person name="Haga K."/>
            <person name="Haiech J."/>
            <person name="Harwood C.R."/>
            <person name="Henaut A."/>
            <person name="Hilbert H."/>
            <person name="Holsappel S."/>
            <person name="Hosono S."/>
            <person name="Hullo M.-F."/>
            <person name="Itaya M."/>
            <person name="Jones L.-M."/>
            <person name="Joris B."/>
            <person name="Karamata D."/>
            <person name="Kasahara Y."/>
            <person name="Klaerr-Blanchard M."/>
            <person name="Klein C."/>
            <person name="Kobayashi Y."/>
            <person name="Koetter P."/>
            <person name="Koningstein G."/>
            <person name="Krogh S."/>
            <person name="Kumano M."/>
            <person name="Kurita K."/>
            <person name="Lapidus A."/>
            <person name="Lardinois S."/>
            <person name="Lauber J."/>
            <person name="Lazarevic V."/>
            <person name="Lee S.-M."/>
            <person name="Levine A."/>
            <person name="Liu H."/>
            <person name="Masuda S."/>
            <person name="Mauel C."/>
            <person name="Medigue C."/>
            <person name="Medina N."/>
            <person name="Mellado R.P."/>
            <person name="Mizuno M."/>
            <person name="Moestl D."/>
            <person name="Nakai S."/>
            <person name="Noback M."/>
            <person name="Noone D."/>
            <person name="O'Reilly M."/>
            <person name="Ogawa K."/>
            <person name="Ogiwara A."/>
            <person name="Oudega B."/>
            <person name="Park S.-H."/>
            <person name="Parro V."/>
            <person name="Pohl T.M."/>
            <person name="Portetelle D."/>
            <person name="Porwollik S."/>
            <person name="Prescott A.M."/>
            <person name="Presecan E."/>
            <person name="Pujic P."/>
            <person name="Purnelle B."/>
            <person name="Rapoport G."/>
            <person name="Rey M."/>
            <person name="Reynolds S."/>
            <person name="Rieger M."/>
            <person name="Rivolta C."/>
            <person name="Rocha E."/>
            <person name="Roche B."/>
            <person name="Rose M."/>
            <person name="Sadaie Y."/>
            <person name="Sato T."/>
            <person name="Scanlan E."/>
            <person name="Schleich S."/>
            <person name="Schroeter R."/>
            <person name="Scoffone F."/>
            <person name="Sekiguchi J."/>
            <person name="Sekowska A."/>
            <person name="Seror S.J."/>
            <person name="Serror P."/>
            <person name="Shin B.-S."/>
            <person name="Soldo B."/>
            <person name="Sorokin A."/>
            <person name="Tacconi E."/>
            <person name="Takagi T."/>
            <person name="Takahashi H."/>
            <person name="Takemaru K."/>
            <person name="Takeuchi M."/>
            <person name="Tamakoshi A."/>
            <person name="Tanaka T."/>
            <person name="Terpstra P."/>
            <person name="Tognoni A."/>
            <person name="Tosato V."/>
            <person name="Uchiyama S."/>
            <person name="Vandenbol M."/>
            <person name="Vannier F."/>
            <person name="Vassarotti A."/>
            <person name="Viari A."/>
            <person name="Wambutt R."/>
            <person name="Wedler E."/>
            <person name="Wedler H."/>
            <person name="Weitzenegger T."/>
            <person name="Winters P."/>
            <person name="Wipat A."/>
            <person name="Yamamoto H."/>
            <person name="Yamane K."/>
            <person name="Yasumoto K."/>
            <person name="Yata K."/>
            <person name="Yoshida K."/>
            <person name="Yoshikawa H.-F."/>
            <person name="Zumstein E."/>
            <person name="Yoshikawa H."/>
            <person name="Danchin A."/>
        </authorList>
    </citation>
    <scope>NUCLEOTIDE SEQUENCE [LARGE SCALE GENOMIC DNA]</scope>
    <source>
        <strain>168</strain>
    </source>
</reference>
<reference evidence="4 5" key="5">
    <citation type="journal article" date="2018" name="Proc. Natl. Acad. Sci. U.S.A.">
        <title>Structural basis for antibiotic resistance mediated by the Bacillus subtilis ABCF ATPase VmlR.</title>
        <authorList>
            <person name="Crowe-McAuliffe C."/>
            <person name="Graf M."/>
            <person name="Huter P."/>
            <person name="Takada H."/>
            <person name="Abdelshahid M."/>
            <person name="Novacek J."/>
            <person name="Murina V."/>
            <person name="Atkinson G.C."/>
            <person name="Hauryliuk V."/>
            <person name="Wilson D.N."/>
        </authorList>
    </citation>
    <scope>STRUCTURE BY ELECTRON MICROSCOPY (3.10 ANGSTROMS) OF 1-44 WITH AND WITHOUT VIRGINIAMYCIN M</scope>
    <scope>SUBUNIT</scope>
</reference>
<comment type="subunit">
    <text evidence="2">Part of the 50S ribosomal subunit.</text>
</comment>
<comment type="similarity">
    <text evidence="3">Belongs to the bacterial ribosomal protein bL34 family.</text>
</comment>
<organism>
    <name type="scientific">Bacillus subtilis (strain 168)</name>
    <dbReference type="NCBI Taxonomy" id="224308"/>
    <lineage>
        <taxon>Bacteria</taxon>
        <taxon>Bacillati</taxon>
        <taxon>Bacillota</taxon>
        <taxon>Bacilli</taxon>
        <taxon>Bacillales</taxon>
        <taxon>Bacillaceae</taxon>
        <taxon>Bacillus</taxon>
    </lineage>
</organism>
<proteinExistence type="evidence at protein level"/>
<gene>
    <name type="primary">rpmH</name>
    <name type="ordered locus">BSU41060</name>
</gene>
<protein>
    <recommendedName>
        <fullName evidence="3">Large ribosomal subunit protein bL34</fullName>
    </recommendedName>
    <alternativeName>
        <fullName>50S ribosomal protein L34</fullName>
    </alternativeName>
</protein>
<sequence>MKRTFQPNNRKRSKVHGFRSRMSSKNGRLVLARRRRKGRKVLSA</sequence>
<keyword id="KW-0002">3D-structure</keyword>
<keyword id="KW-1185">Reference proteome</keyword>
<keyword id="KW-0687">Ribonucleoprotein</keyword>
<keyword id="KW-0689">Ribosomal protein</keyword>
<evidence type="ECO:0000256" key="1">
    <source>
        <dbReference type="SAM" id="MobiDB-lite"/>
    </source>
</evidence>
<evidence type="ECO:0000269" key="2">
    <source>
    </source>
</evidence>
<evidence type="ECO:0000305" key="3"/>
<evidence type="ECO:0007744" key="4">
    <source>
        <dbReference type="PDB" id="6HA1"/>
    </source>
</evidence>
<evidence type="ECO:0007744" key="5">
    <source>
        <dbReference type="PDB" id="6HA8"/>
    </source>
</evidence>
<evidence type="ECO:0007829" key="6">
    <source>
        <dbReference type="PDB" id="8S1P"/>
    </source>
</evidence>
<dbReference type="EMBL" id="X02369">
    <property type="protein sequence ID" value="CAA26216.1"/>
    <property type="molecule type" value="Genomic_DNA"/>
</dbReference>
<dbReference type="EMBL" id="X62539">
    <property type="protein sequence ID" value="CAA44399.1"/>
    <property type="molecule type" value="Genomic_DNA"/>
</dbReference>
<dbReference type="EMBL" id="D26185">
    <property type="protein sequence ID" value="BAA05236.1"/>
    <property type="molecule type" value="Genomic_DNA"/>
</dbReference>
<dbReference type="EMBL" id="AL009126">
    <property type="protein sequence ID" value="CAB16143.1"/>
    <property type="molecule type" value="Genomic_DNA"/>
</dbReference>
<dbReference type="PIR" id="I40435">
    <property type="entry name" value="R6BS34"/>
</dbReference>
<dbReference type="RefSeq" id="NP_391986.1">
    <property type="nucleotide sequence ID" value="NC_000964.3"/>
</dbReference>
<dbReference type="RefSeq" id="WP_003178075.1">
    <property type="nucleotide sequence ID" value="NZ_OZ025638.1"/>
</dbReference>
<dbReference type="PDB" id="3J3V">
    <property type="method" value="EM"/>
    <property type="resolution" value="13.30 A"/>
    <property type="chains" value="2=1-44"/>
</dbReference>
<dbReference type="PDB" id="3J3W">
    <property type="method" value="EM"/>
    <property type="resolution" value="10.70 A"/>
    <property type="chains" value="2=1-44"/>
</dbReference>
<dbReference type="PDB" id="3J9W">
    <property type="method" value="EM"/>
    <property type="resolution" value="3.90 A"/>
    <property type="chains" value="B6=1-44"/>
</dbReference>
<dbReference type="PDB" id="5NJT">
    <property type="method" value="EM"/>
    <property type="resolution" value="3.80 A"/>
    <property type="chains" value="r=1-44"/>
</dbReference>
<dbReference type="PDB" id="6HA1">
    <property type="method" value="EM"/>
    <property type="resolution" value="3.10 A"/>
    <property type="chains" value="2=1-44"/>
</dbReference>
<dbReference type="PDB" id="6HA8">
    <property type="method" value="EM"/>
    <property type="resolution" value="3.50 A"/>
    <property type="chains" value="2=1-44"/>
</dbReference>
<dbReference type="PDB" id="6HTQ">
    <property type="method" value="EM"/>
    <property type="resolution" value="4.50 A"/>
    <property type="chains" value="3=1-44"/>
</dbReference>
<dbReference type="PDB" id="6PPF">
    <property type="method" value="EM"/>
    <property type="resolution" value="3.40 A"/>
    <property type="chains" value="d=1-44"/>
</dbReference>
<dbReference type="PDB" id="6PPK">
    <property type="method" value="EM"/>
    <property type="resolution" value="4.40 A"/>
    <property type="chains" value="d=1-44"/>
</dbReference>
<dbReference type="PDB" id="6PVK">
    <property type="method" value="EM"/>
    <property type="resolution" value="3.40 A"/>
    <property type="chains" value="d=1-44"/>
</dbReference>
<dbReference type="PDB" id="6TNN">
    <property type="method" value="EM"/>
    <property type="resolution" value="3.07 A"/>
    <property type="chains" value="r=1-44"/>
</dbReference>
<dbReference type="PDB" id="6TPQ">
    <property type="method" value="EM"/>
    <property type="resolution" value="3.07 A"/>
    <property type="chains" value="r=1-44"/>
</dbReference>
<dbReference type="PDB" id="7AQC">
    <property type="method" value="EM"/>
    <property type="resolution" value="2.99 A"/>
    <property type="chains" value="d=1-44"/>
</dbReference>
<dbReference type="PDB" id="7AQD">
    <property type="method" value="EM"/>
    <property type="resolution" value="3.10 A"/>
    <property type="chains" value="d=1-44"/>
</dbReference>
<dbReference type="PDB" id="7AS8">
    <property type="method" value="EM"/>
    <property type="resolution" value="2.90 A"/>
    <property type="chains" value="h=1-44"/>
</dbReference>
<dbReference type="PDB" id="7AS9">
    <property type="method" value="EM"/>
    <property type="resolution" value="3.50 A"/>
    <property type="chains" value="h=1-44"/>
</dbReference>
<dbReference type="PDB" id="7O5B">
    <property type="method" value="EM"/>
    <property type="resolution" value="3.33 A"/>
    <property type="chains" value="2=1-44"/>
</dbReference>
<dbReference type="PDB" id="7OPE">
    <property type="method" value="EM"/>
    <property type="resolution" value="3.20 A"/>
    <property type="chains" value="h=1-44"/>
</dbReference>
<dbReference type="PDB" id="7QGU">
    <property type="method" value="EM"/>
    <property type="resolution" value="4.75 A"/>
    <property type="chains" value="d=1-44"/>
</dbReference>
<dbReference type="PDB" id="7QH4">
    <property type="method" value="EM"/>
    <property type="resolution" value="5.45 A"/>
    <property type="chains" value="d=1-44"/>
</dbReference>
<dbReference type="PDB" id="7QV1">
    <property type="method" value="EM"/>
    <property type="resolution" value="3.50 A"/>
    <property type="chains" value="2=1-44"/>
</dbReference>
<dbReference type="PDB" id="7QV2">
    <property type="method" value="EM"/>
    <property type="resolution" value="3.50 A"/>
    <property type="chains" value="2=1-44"/>
</dbReference>
<dbReference type="PDB" id="7QV3">
    <property type="method" value="EM"/>
    <property type="resolution" value="5.14 A"/>
    <property type="chains" value="2=1-44"/>
</dbReference>
<dbReference type="PDB" id="7S9U">
    <property type="method" value="EM"/>
    <property type="resolution" value="3.20 A"/>
    <property type="chains" value="d=1-44"/>
</dbReference>
<dbReference type="PDB" id="7SAE">
    <property type="method" value="EM"/>
    <property type="resolution" value="3.00 A"/>
    <property type="chains" value="d=1-44"/>
</dbReference>
<dbReference type="PDB" id="8BUU">
    <property type="method" value="EM"/>
    <property type="resolution" value="2.90 A"/>
    <property type="chains" value="2=1-44"/>
</dbReference>
<dbReference type="PDB" id="8QCQ">
    <property type="method" value="EM"/>
    <property type="resolution" value="2.30 A"/>
    <property type="chains" value="2=1-44"/>
</dbReference>
<dbReference type="PDB" id="8QPP">
    <property type="method" value="EM"/>
    <property type="resolution" value="3.40 A"/>
    <property type="chains" value="2=1-44"/>
</dbReference>
<dbReference type="PDB" id="8R55">
    <property type="method" value="EM"/>
    <property type="resolution" value="3.57 A"/>
    <property type="chains" value="2=1-44"/>
</dbReference>
<dbReference type="PDB" id="8S1P">
    <property type="method" value="EM"/>
    <property type="resolution" value="1.96 A"/>
    <property type="chains" value="2=1-44"/>
</dbReference>
<dbReference type="PDB" id="8S1U">
    <property type="method" value="EM"/>
    <property type="resolution" value="3.40 A"/>
    <property type="chains" value="2=1-44"/>
</dbReference>
<dbReference type="PDB" id="9BS0">
    <property type="method" value="EM"/>
    <property type="resolution" value="3.30 A"/>
    <property type="chains" value="U=1-44"/>
</dbReference>
<dbReference type="PDB" id="9BSL">
    <property type="method" value="EM"/>
    <property type="resolution" value="3.10 A"/>
    <property type="chains" value="U=1-44"/>
</dbReference>
<dbReference type="PDB" id="9BSS">
    <property type="method" value="EM"/>
    <property type="resolution" value="3.10 A"/>
    <property type="chains" value="U=1-44"/>
</dbReference>
<dbReference type="PDBsum" id="3J3V"/>
<dbReference type="PDBsum" id="3J3W"/>
<dbReference type="PDBsum" id="3J9W"/>
<dbReference type="PDBsum" id="5NJT"/>
<dbReference type="PDBsum" id="6HA1"/>
<dbReference type="PDBsum" id="6HA8"/>
<dbReference type="PDBsum" id="6HTQ"/>
<dbReference type="PDBsum" id="6PPF"/>
<dbReference type="PDBsum" id="6PPK"/>
<dbReference type="PDBsum" id="6PVK"/>
<dbReference type="PDBsum" id="6TNN"/>
<dbReference type="PDBsum" id="6TPQ"/>
<dbReference type="PDBsum" id="7AQC"/>
<dbReference type="PDBsum" id="7AQD"/>
<dbReference type="PDBsum" id="7AS8"/>
<dbReference type="PDBsum" id="7AS9"/>
<dbReference type="PDBsum" id="7O5B"/>
<dbReference type="PDBsum" id="7OPE"/>
<dbReference type="PDBsum" id="7QGU"/>
<dbReference type="PDBsum" id="7QH4"/>
<dbReference type="PDBsum" id="7QV1"/>
<dbReference type="PDBsum" id="7QV2"/>
<dbReference type="PDBsum" id="7QV3"/>
<dbReference type="PDBsum" id="7S9U"/>
<dbReference type="PDBsum" id="7SAE"/>
<dbReference type="PDBsum" id="8BUU"/>
<dbReference type="PDBsum" id="8QCQ"/>
<dbReference type="PDBsum" id="8QPP"/>
<dbReference type="PDBsum" id="8R55"/>
<dbReference type="PDBsum" id="8S1P"/>
<dbReference type="PDBsum" id="8S1U"/>
<dbReference type="PDBsum" id="9BS0"/>
<dbReference type="PDBsum" id="9BSL"/>
<dbReference type="PDBsum" id="9BSS"/>
<dbReference type="EMDB" id="EMD-0176"/>
<dbReference type="EMDB" id="EMD-0177"/>
<dbReference type="EMDB" id="EMD-0270"/>
<dbReference type="EMDB" id="EMD-10535"/>
<dbReference type="EMDB" id="EMD-10543"/>
<dbReference type="EMDB" id="EMD-11862"/>
<dbReference type="EMDB" id="EMD-11864"/>
<dbReference type="EMDB" id="EMD-11889"/>
<dbReference type="EMDB" id="EMD-11890"/>
<dbReference type="EMDB" id="EMD-12734"/>
<dbReference type="EMDB" id="EMD-13017"/>
<dbReference type="EMDB" id="EMD-14157"/>
<dbReference type="EMDB" id="EMD-14158"/>
<dbReference type="EMDB" id="EMD-14159"/>
<dbReference type="EMDB" id="EMD-16246"/>
<dbReference type="EMDB" id="EMD-18332"/>
<dbReference type="EMDB" id="EMD-19638"/>
<dbReference type="EMDB" id="EMD-19641"/>
<dbReference type="EMDB" id="EMD-3656"/>
<dbReference type="EMDB" id="EMD-44849"/>
<dbReference type="EMDB" id="EMD-44869"/>
<dbReference type="EMDB" id="EMD-44871"/>
<dbReference type="SMR" id="P05647"/>
<dbReference type="FunCoup" id="P05647">
    <property type="interactions" value="291"/>
</dbReference>
<dbReference type="IntAct" id="P05647">
    <property type="interactions" value="1"/>
</dbReference>
<dbReference type="STRING" id="224308.BSU41060"/>
<dbReference type="PaxDb" id="224308-BSU41060"/>
<dbReference type="EnsemblBacteria" id="CAB16143">
    <property type="protein sequence ID" value="CAB16143"/>
    <property type="gene ID" value="BSU_41060"/>
</dbReference>
<dbReference type="GeneID" id="93082950"/>
<dbReference type="GeneID" id="937942"/>
<dbReference type="KEGG" id="bsu:BSU41060"/>
<dbReference type="PATRIC" id="fig|224308.179.peg.4448"/>
<dbReference type="eggNOG" id="COG0230">
    <property type="taxonomic scope" value="Bacteria"/>
</dbReference>
<dbReference type="InParanoid" id="P05647"/>
<dbReference type="PhylomeDB" id="P05647"/>
<dbReference type="BioCyc" id="BSUB:BSU41060-MONOMER"/>
<dbReference type="EvolutionaryTrace" id="P05647"/>
<dbReference type="PRO" id="PR:P05647"/>
<dbReference type="Proteomes" id="UP000001570">
    <property type="component" value="Chromosome"/>
</dbReference>
<dbReference type="GO" id="GO:1990904">
    <property type="term" value="C:ribonucleoprotein complex"/>
    <property type="evidence" value="ECO:0007669"/>
    <property type="project" value="UniProtKB-KW"/>
</dbReference>
<dbReference type="GO" id="GO:0005840">
    <property type="term" value="C:ribosome"/>
    <property type="evidence" value="ECO:0007669"/>
    <property type="project" value="UniProtKB-KW"/>
</dbReference>
<dbReference type="GO" id="GO:0003735">
    <property type="term" value="F:structural constituent of ribosome"/>
    <property type="evidence" value="ECO:0007669"/>
    <property type="project" value="InterPro"/>
</dbReference>
<dbReference type="GO" id="GO:0006412">
    <property type="term" value="P:translation"/>
    <property type="evidence" value="ECO:0007669"/>
    <property type="project" value="UniProtKB-UniRule"/>
</dbReference>
<dbReference type="FunFam" id="1.10.287.3980:FF:000001">
    <property type="entry name" value="Mitochondrial ribosomal protein L34"/>
    <property type="match status" value="1"/>
</dbReference>
<dbReference type="Gene3D" id="1.10.287.3980">
    <property type="match status" value="1"/>
</dbReference>
<dbReference type="HAMAP" id="MF_00391">
    <property type="entry name" value="Ribosomal_bL34"/>
    <property type="match status" value="1"/>
</dbReference>
<dbReference type="InterPro" id="IPR000271">
    <property type="entry name" value="Ribosomal_bL34"/>
</dbReference>
<dbReference type="InterPro" id="IPR020939">
    <property type="entry name" value="Ribosomal_bL34_CS"/>
</dbReference>
<dbReference type="NCBIfam" id="TIGR01030">
    <property type="entry name" value="rpmH_bact"/>
    <property type="match status" value="1"/>
</dbReference>
<dbReference type="PANTHER" id="PTHR14503:SF4">
    <property type="entry name" value="LARGE RIBOSOMAL SUBUNIT PROTEIN BL34M"/>
    <property type="match status" value="1"/>
</dbReference>
<dbReference type="PANTHER" id="PTHR14503">
    <property type="entry name" value="MITOCHONDRIAL RIBOSOMAL PROTEIN 34 FAMILY MEMBER"/>
    <property type="match status" value="1"/>
</dbReference>
<dbReference type="Pfam" id="PF00468">
    <property type="entry name" value="Ribosomal_L34"/>
    <property type="match status" value="1"/>
</dbReference>
<dbReference type="PROSITE" id="PS00784">
    <property type="entry name" value="RIBOSOMAL_L34"/>
    <property type="match status" value="1"/>
</dbReference>
<accession>P05647</accession>
<feature type="chain" id="PRO_0000187341" description="Large ribosomal subunit protein bL34">
    <location>
        <begin position="1"/>
        <end position="44"/>
    </location>
</feature>
<feature type="region of interest" description="Disordered" evidence="1">
    <location>
        <begin position="1"/>
        <end position="27"/>
    </location>
</feature>
<feature type="compositionally biased region" description="Basic residues" evidence="1">
    <location>
        <begin position="1"/>
        <end position="19"/>
    </location>
</feature>
<feature type="helix" evidence="6">
    <location>
        <begin position="9"/>
        <end position="16"/>
    </location>
</feature>
<feature type="helix" evidence="6">
    <location>
        <begin position="18"/>
        <end position="22"/>
    </location>
</feature>
<feature type="helix" evidence="6">
    <location>
        <begin position="25"/>
        <end position="37"/>
    </location>
</feature>
<name>RL34_BACSU</name>